<accession>B5FC65</accession>
<reference key="1">
    <citation type="submission" date="2008-08" db="EMBL/GenBank/DDBJ databases">
        <title>Complete sequence of Vibrio fischeri strain MJ11.</title>
        <authorList>
            <person name="Mandel M.J."/>
            <person name="Stabb E.V."/>
            <person name="Ruby E.G."/>
            <person name="Ferriera S."/>
            <person name="Johnson J."/>
            <person name="Kravitz S."/>
            <person name="Beeson K."/>
            <person name="Sutton G."/>
            <person name="Rogers Y.-H."/>
            <person name="Friedman R."/>
            <person name="Frazier M."/>
            <person name="Venter J.C."/>
        </authorList>
    </citation>
    <scope>NUCLEOTIDE SEQUENCE [LARGE SCALE GENOMIC DNA]</scope>
    <source>
        <strain>MJ11</strain>
    </source>
</reference>
<feature type="chain" id="PRO_1000132843" description="Ribosomal protein L11 methyltransferase">
    <location>
        <begin position="1"/>
        <end position="294"/>
    </location>
</feature>
<feature type="binding site" evidence="1">
    <location>
        <position position="146"/>
    </location>
    <ligand>
        <name>S-adenosyl-L-methionine</name>
        <dbReference type="ChEBI" id="CHEBI:59789"/>
    </ligand>
</feature>
<feature type="binding site" evidence="1">
    <location>
        <position position="167"/>
    </location>
    <ligand>
        <name>S-adenosyl-L-methionine</name>
        <dbReference type="ChEBI" id="CHEBI:59789"/>
    </ligand>
</feature>
<feature type="binding site" evidence="1">
    <location>
        <position position="189"/>
    </location>
    <ligand>
        <name>S-adenosyl-L-methionine</name>
        <dbReference type="ChEBI" id="CHEBI:59789"/>
    </ligand>
</feature>
<feature type="binding site" evidence="1">
    <location>
        <position position="231"/>
    </location>
    <ligand>
        <name>S-adenosyl-L-methionine</name>
        <dbReference type="ChEBI" id="CHEBI:59789"/>
    </ligand>
</feature>
<proteinExistence type="inferred from homology"/>
<organism>
    <name type="scientific">Aliivibrio fischeri (strain MJ11)</name>
    <name type="common">Vibrio fischeri</name>
    <dbReference type="NCBI Taxonomy" id="388396"/>
    <lineage>
        <taxon>Bacteria</taxon>
        <taxon>Pseudomonadati</taxon>
        <taxon>Pseudomonadota</taxon>
        <taxon>Gammaproteobacteria</taxon>
        <taxon>Vibrionales</taxon>
        <taxon>Vibrionaceae</taxon>
        <taxon>Aliivibrio</taxon>
    </lineage>
</organism>
<keyword id="KW-0963">Cytoplasm</keyword>
<keyword id="KW-0489">Methyltransferase</keyword>
<keyword id="KW-0949">S-adenosyl-L-methionine</keyword>
<keyword id="KW-0808">Transferase</keyword>
<comment type="function">
    <text evidence="1">Methylates ribosomal protein L11.</text>
</comment>
<comment type="catalytic activity">
    <reaction evidence="1">
        <text>L-lysyl-[protein] + 3 S-adenosyl-L-methionine = N(6),N(6),N(6)-trimethyl-L-lysyl-[protein] + 3 S-adenosyl-L-homocysteine + 3 H(+)</text>
        <dbReference type="Rhea" id="RHEA:54192"/>
        <dbReference type="Rhea" id="RHEA-COMP:9752"/>
        <dbReference type="Rhea" id="RHEA-COMP:13826"/>
        <dbReference type="ChEBI" id="CHEBI:15378"/>
        <dbReference type="ChEBI" id="CHEBI:29969"/>
        <dbReference type="ChEBI" id="CHEBI:57856"/>
        <dbReference type="ChEBI" id="CHEBI:59789"/>
        <dbReference type="ChEBI" id="CHEBI:61961"/>
    </reaction>
</comment>
<comment type="subcellular location">
    <subcellularLocation>
        <location evidence="1">Cytoplasm</location>
    </subcellularLocation>
</comment>
<comment type="similarity">
    <text evidence="1">Belongs to the methyltransferase superfamily. PrmA family.</text>
</comment>
<gene>
    <name evidence="1" type="primary">prmA</name>
    <name type="ordered locus">VFMJ11_2507</name>
</gene>
<dbReference type="EC" id="2.1.1.-" evidence="1"/>
<dbReference type="EMBL" id="CP001139">
    <property type="protein sequence ID" value="ACH66462.1"/>
    <property type="molecule type" value="Genomic_DNA"/>
</dbReference>
<dbReference type="RefSeq" id="WP_005421283.1">
    <property type="nucleotide sequence ID" value="NC_011184.1"/>
</dbReference>
<dbReference type="SMR" id="B5FC65"/>
<dbReference type="GeneID" id="54165106"/>
<dbReference type="KEGG" id="vfm:VFMJ11_2507"/>
<dbReference type="HOGENOM" id="CLU_049382_4_1_6"/>
<dbReference type="Proteomes" id="UP000001857">
    <property type="component" value="Chromosome I"/>
</dbReference>
<dbReference type="GO" id="GO:0005829">
    <property type="term" value="C:cytosol"/>
    <property type="evidence" value="ECO:0007669"/>
    <property type="project" value="TreeGrafter"/>
</dbReference>
<dbReference type="GO" id="GO:0016279">
    <property type="term" value="F:protein-lysine N-methyltransferase activity"/>
    <property type="evidence" value="ECO:0007669"/>
    <property type="project" value="TreeGrafter"/>
</dbReference>
<dbReference type="GO" id="GO:0032259">
    <property type="term" value="P:methylation"/>
    <property type="evidence" value="ECO:0007669"/>
    <property type="project" value="UniProtKB-KW"/>
</dbReference>
<dbReference type="CDD" id="cd02440">
    <property type="entry name" value="AdoMet_MTases"/>
    <property type="match status" value="1"/>
</dbReference>
<dbReference type="Gene3D" id="3.40.50.150">
    <property type="entry name" value="Vaccinia Virus protein VP39"/>
    <property type="match status" value="1"/>
</dbReference>
<dbReference type="HAMAP" id="MF_00735">
    <property type="entry name" value="Methyltr_PrmA"/>
    <property type="match status" value="1"/>
</dbReference>
<dbReference type="InterPro" id="IPR050078">
    <property type="entry name" value="Ribosomal_L11_MeTrfase_PrmA"/>
</dbReference>
<dbReference type="InterPro" id="IPR004498">
    <property type="entry name" value="Ribosomal_PrmA_MeTrfase"/>
</dbReference>
<dbReference type="InterPro" id="IPR029063">
    <property type="entry name" value="SAM-dependent_MTases_sf"/>
</dbReference>
<dbReference type="NCBIfam" id="TIGR00406">
    <property type="entry name" value="prmA"/>
    <property type="match status" value="1"/>
</dbReference>
<dbReference type="PANTHER" id="PTHR43648">
    <property type="entry name" value="ELECTRON TRANSFER FLAVOPROTEIN BETA SUBUNIT LYSINE METHYLTRANSFERASE"/>
    <property type="match status" value="1"/>
</dbReference>
<dbReference type="PANTHER" id="PTHR43648:SF1">
    <property type="entry name" value="ELECTRON TRANSFER FLAVOPROTEIN BETA SUBUNIT LYSINE METHYLTRANSFERASE"/>
    <property type="match status" value="1"/>
</dbReference>
<dbReference type="Pfam" id="PF06325">
    <property type="entry name" value="PrmA"/>
    <property type="match status" value="1"/>
</dbReference>
<dbReference type="PIRSF" id="PIRSF000401">
    <property type="entry name" value="RPL11_MTase"/>
    <property type="match status" value="1"/>
</dbReference>
<dbReference type="SUPFAM" id="SSF53335">
    <property type="entry name" value="S-adenosyl-L-methionine-dependent methyltransferases"/>
    <property type="match status" value="1"/>
</dbReference>
<evidence type="ECO:0000255" key="1">
    <source>
        <dbReference type="HAMAP-Rule" id="MF_00735"/>
    </source>
</evidence>
<protein>
    <recommendedName>
        <fullName evidence="1">Ribosomal protein L11 methyltransferase</fullName>
        <shortName evidence="1">L11 Mtase</shortName>
        <ecNumber evidence="1">2.1.1.-</ecNumber>
    </recommendedName>
</protein>
<sequence length="294" mass="32373">MPWIQVKLNATSENAEQIGDMLMEETGALSITFLDAKDTPVFEPLPGETRLWGETDILALYDAEADMDFVITQLKASRLLEEGFAHKIEQLEDKDWEREWMDNFHPMQFGKRLWICPSWREIPEPDAVNVMLDPGLAFGTGTHPTTSLCLEWLEGLDLEGKTVVDFGCGSGILAIAAIKLGAAKVIGIDIDPQAILASKDNATRNGVADQIELYLPQDQPEGLIADVVVANILAGPLRELSGIITSLVKPQGQLAMSGVLDTQAEDVASYYAEQFDLDAIVEQQEWCRISGKKK</sequence>
<name>PRMA_ALIFM</name>